<gene>
    <name evidence="1" type="primary">whiA</name>
    <name type="ordered locus">BT9727_4831</name>
</gene>
<sequence>MSFASETKKELTNLEMKECCEKAELSALLRMNGSLSFSNRRLSIDIQTENAAIARRIYTLLKKGYDVTVELLVRKKMRLKKNNVYIVRLVEKSREILADLHIVRDDFSFIRNISQELIEKKCCKRSYLRGAFLAGGSVNNPETSSYHLEIFSLYKEHNDAICELMNGFDLNSKTLERRKGYITYLKEAEKITEFLNIIGAHNALLRFEDIRIVRDMRNSVNRLVNCETANLNKTIGAALRQIENIRYIDETVGLDILPDKLREIAQLRRDYQDVTLKELGEMVSGGKISKSGINHRLRKIDDIAEKLRAGETVAKK</sequence>
<evidence type="ECO:0000255" key="1">
    <source>
        <dbReference type="HAMAP-Rule" id="MF_01420"/>
    </source>
</evidence>
<proteinExistence type="inferred from homology"/>
<dbReference type="EMBL" id="AE017355">
    <property type="protein sequence ID" value="AAT62576.1"/>
    <property type="molecule type" value="Genomic_DNA"/>
</dbReference>
<dbReference type="RefSeq" id="WP_000006561.1">
    <property type="nucleotide sequence ID" value="NC_005957.1"/>
</dbReference>
<dbReference type="RefSeq" id="YP_039140.1">
    <property type="nucleotide sequence ID" value="NC_005957.1"/>
</dbReference>
<dbReference type="SMR" id="Q6HBD6"/>
<dbReference type="GeneID" id="75088327"/>
<dbReference type="KEGG" id="btk:BT9727_4831"/>
<dbReference type="PATRIC" id="fig|281309.8.peg.5137"/>
<dbReference type="HOGENOM" id="CLU_053282_0_0_9"/>
<dbReference type="Proteomes" id="UP000001301">
    <property type="component" value="Chromosome"/>
</dbReference>
<dbReference type="GO" id="GO:0003677">
    <property type="term" value="F:DNA binding"/>
    <property type="evidence" value="ECO:0007669"/>
    <property type="project" value="UniProtKB-UniRule"/>
</dbReference>
<dbReference type="GO" id="GO:0051301">
    <property type="term" value="P:cell division"/>
    <property type="evidence" value="ECO:0007669"/>
    <property type="project" value="UniProtKB-UniRule"/>
</dbReference>
<dbReference type="GO" id="GO:0043937">
    <property type="term" value="P:regulation of sporulation"/>
    <property type="evidence" value="ECO:0007669"/>
    <property type="project" value="InterPro"/>
</dbReference>
<dbReference type="FunFam" id="3.10.28.10:FF:000002">
    <property type="entry name" value="Probable cell division protein WhiA"/>
    <property type="match status" value="1"/>
</dbReference>
<dbReference type="Gene3D" id="3.10.28.10">
    <property type="entry name" value="Homing endonucleases"/>
    <property type="match status" value="1"/>
</dbReference>
<dbReference type="HAMAP" id="MF_01420">
    <property type="entry name" value="HTH_type_WhiA"/>
    <property type="match status" value="1"/>
</dbReference>
<dbReference type="InterPro" id="IPR027434">
    <property type="entry name" value="Homing_endonucl"/>
</dbReference>
<dbReference type="InterPro" id="IPR018478">
    <property type="entry name" value="Sporu_reg_WhiA_N_dom"/>
</dbReference>
<dbReference type="InterPro" id="IPR003802">
    <property type="entry name" value="Sporulation_regulator_WhiA"/>
</dbReference>
<dbReference type="InterPro" id="IPR023054">
    <property type="entry name" value="Sporulation_regulator_WhiA_C"/>
</dbReference>
<dbReference type="InterPro" id="IPR039518">
    <property type="entry name" value="WhiA_LAGLIDADG_dom"/>
</dbReference>
<dbReference type="NCBIfam" id="TIGR00647">
    <property type="entry name" value="DNA_bind_WhiA"/>
    <property type="match status" value="1"/>
</dbReference>
<dbReference type="PANTHER" id="PTHR37307">
    <property type="entry name" value="CELL DIVISION PROTEIN WHIA-RELATED"/>
    <property type="match status" value="1"/>
</dbReference>
<dbReference type="PANTHER" id="PTHR37307:SF1">
    <property type="entry name" value="CELL DIVISION PROTEIN WHIA-RELATED"/>
    <property type="match status" value="1"/>
</dbReference>
<dbReference type="Pfam" id="PF02650">
    <property type="entry name" value="HTH_WhiA"/>
    <property type="match status" value="1"/>
</dbReference>
<dbReference type="Pfam" id="PF14527">
    <property type="entry name" value="LAGLIDADG_WhiA"/>
    <property type="match status" value="1"/>
</dbReference>
<dbReference type="Pfam" id="PF10298">
    <property type="entry name" value="WhiA_N"/>
    <property type="match status" value="1"/>
</dbReference>
<dbReference type="SUPFAM" id="SSF55608">
    <property type="entry name" value="Homing endonucleases"/>
    <property type="match status" value="1"/>
</dbReference>
<organism>
    <name type="scientific">Bacillus thuringiensis subsp. konkukian (strain 97-27)</name>
    <dbReference type="NCBI Taxonomy" id="281309"/>
    <lineage>
        <taxon>Bacteria</taxon>
        <taxon>Bacillati</taxon>
        <taxon>Bacillota</taxon>
        <taxon>Bacilli</taxon>
        <taxon>Bacillales</taxon>
        <taxon>Bacillaceae</taxon>
        <taxon>Bacillus</taxon>
        <taxon>Bacillus cereus group</taxon>
    </lineage>
</organism>
<comment type="function">
    <text evidence="1">Involved in cell division and chromosome segregation.</text>
</comment>
<comment type="similarity">
    <text evidence="1">Belongs to the WhiA family.</text>
</comment>
<reference key="1">
    <citation type="journal article" date="2006" name="J. Bacteriol.">
        <title>Pathogenomic sequence analysis of Bacillus cereus and Bacillus thuringiensis isolates closely related to Bacillus anthracis.</title>
        <authorList>
            <person name="Han C.S."/>
            <person name="Xie G."/>
            <person name="Challacombe J.F."/>
            <person name="Altherr M.R."/>
            <person name="Bhotika S.S."/>
            <person name="Bruce D."/>
            <person name="Campbell C.S."/>
            <person name="Campbell M.L."/>
            <person name="Chen J."/>
            <person name="Chertkov O."/>
            <person name="Cleland C."/>
            <person name="Dimitrijevic M."/>
            <person name="Doggett N.A."/>
            <person name="Fawcett J.J."/>
            <person name="Glavina T."/>
            <person name="Goodwin L.A."/>
            <person name="Hill K.K."/>
            <person name="Hitchcock P."/>
            <person name="Jackson P.J."/>
            <person name="Keim P."/>
            <person name="Kewalramani A.R."/>
            <person name="Longmire J."/>
            <person name="Lucas S."/>
            <person name="Malfatti S."/>
            <person name="McMurry K."/>
            <person name="Meincke L.J."/>
            <person name="Misra M."/>
            <person name="Moseman B.L."/>
            <person name="Mundt M."/>
            <person name="Munk A.C."/>
            <person name="Okinaka R.T."/>
            <person name="Parson-Quintana B."/>
            <person name="Reilly L.P."/>
            <person name="Richardson P."/>
            <person name="Robinson D.L."/>
            <person name="Rubin E."/>
            <person name="Saunders E."/>
            <person name="Tapia R."/>
            <person name="Tesmer J.G."/>
            <person name="Thayer N."/>
            <person name="Thompson L.S."/>
            <person name="Tice H."/>
            <person name="Ticknor L.O."/>
            <person name="Wills P.L."/>
            <person name="Brettin T.S."/>
            <person name="Gilna P."/>
        </authorList>
    </citation>
    <scope>NUCLEOTIDE SEQUENCE [LARGE SCALE GENOMIC DNA]</scope>
    <source>
        <strain>97-27</strain>
    </source>
</reference>
<protein>
    <recommendedName>
        <fullName evidence="1">Probable cell division protein WhiA</fullName>
    </recommendedName>
</protein>
<feature type="chain" id="PRO_0000376444" description="Probable cell division protein WhiA">
    <location>
        <begin position="1"/>
        <end position="316"/>
    </location>
</feature>
<feature type="DNA-binding region" description="H-T-H motif" evidence="1">
    <location>
        <begin position="275"/>
        <end position="309"/>
    </location>
</feature>
<keyword id="KW-0131">Cell cycle</keyword>
<keyword id="KW-0132">Cell division</keyword>
<keyword id="KW-0238">DNA-binding</keyword>
<name>WHIA_BACHK</name>
<accession>Q6HBD6</accession>